<protein>
    <recommendedName>
        <fullName evidence="1">Phosphoribosyl-AMP cyclohydrolase</fullName>
        <shortName evidence="1">PRA-CH</shortName>
        <ecNumber evidence="1">3.5.4.19</ecNumber>
    </recommendedName>
</protein>
<proteinExistence type="inferred from homology"/>
<organism>
    <name type="scientific">Sphingopyxis alaskensis (strain DSM 13593 / LMG 18877 / RB2256)</name>
    <name type="common">Sphingomonas alaskensis</name>
    <dbReference type="NCBI Taxonomy" id="317655"/>
    <lineage>
        <taxon>Bacteria</taxon>
        <taxon>Pseudomonadati</taxon>
        <taxon>Pseudomonadota</taxon>
        <taxon>Alphaproteobacteria</taxon>
        <taxon>Sphingomonadales</taxon>
        <taxon>Sphingomonadaceae</taxon>
        <taxon>Sphingopyxis</taxon>
    </lineage>
</organism>
<reference key="1">
    <citation type="journal article" date="2009" name="Proc. Natl. Acad. Sci. U.S.A.">
        <title>The genomic basis of trophic strategy in marine bacteria.</title>
        <authorList>
            <person name="Lauro F.M."/>
            <person name="McDougald D."/>
            <person name="Thomas T."/>
            <person name="Williams T.J."/>
            <person name="Egan S."/>
            <person name="Rice S."/>
            <person name="DeMaere M.Z."/>
            <person name="Ting L."/>
            <person name="Ertan H."/>
            <person name="Johnson J."/>
            <person name="Ferriera S."/>
            <person name="Lapidus A."/>
            <person name="Anderson I."/>
            <person name="Kyrpides N."/>
            <person name="Munk A.C."/>
            <person name="Detter C."/>
            <person name="Han C.S."/>
            <person name="Brown M.V."/>
            <person name="Robb F.T."/>
            <person name="Kjelleberg S."/>
            <person name="Cavicchioli R."/>
        </authorList>
    </citation>
    <scope>NUCLEOTIDE SEQUENCE [LARGE SCALE GENOMIC DNA]</scope>
    <source>
        <strain>DSM 13593 / LMG 18877 / RB2256</strain>
    </source>
</reference>
<accession>Q1GSW9</accession>
<name>HIS3_SPHAL</name>
<sequence>MDEQRDTTDRFLPRFDAAGLVTAIVVDADTQALLMVAHMNADAIEATRATGQAHFWSRSRSALWRKGETSGNGLTLVEMRVDCDQDALLLRVKPAGPACHTGRRSCFYRRVEADGGLTFLADDAQG</sequence>
<gene>
    <name evidence="1" type="primary">hisI</name>
    <name type="ordered locus">Sala_1540</name>
</gene>
<evidence type="ECO:0000255" key="1">
    <source>
        <dbReference type="HAMAP-Rule" id="MF_01021"/>
    </source>
</evidence>
<feature type="chain" id="PRO_1000063435" description="Phosphoribosyl-AMP cyclohydrolase">
    <location>
        <begin position="1"/>
        <end position="126"/>
    </location>
</feature>
<feature type="binding site" evidence="1">
    <location>
        <position position="82"/>
    </location>
    <ligand>
        <name>Mg(2+)</name>
        <dbReference type="ChEBI" id="CHEBI:18420"/>
    </ligand>
</feature>
<feature type="binding site" evidence="1">
    <location>
        <position position="83"/>
    </location>
    <ligand>
        <name>Zn(2+)</name>
        <dbReference type="ChEBI" id="CHEBI:29105"/>
        <note>ligand shared between dimeric partners</note>
    </ligand>
</feature>
<feature type="binding site" evidence="1">
    <location>
        <position position="84"/>
    </location>
    <ligand>
        <name>Mg(2+)</name>
        <dbReference type="ChEBI" id="CHEBI:18420"/>
    </ligand>
</feature>
<feature type="binding site" evidence="1">
    <location>
        <position position="86"/>
    </location>
    <ligand>
        <name>Mg(2+)</name>
        <dbReference type="ChEBI" id="CHEBI:18420"/>
    </ligand>
</feature>
<feature type="binding site" evidence="1">
    <location>
        <position position="99"/>
    </location>
    <ligand>
        <name>Zn(2+)</name>
        <dbReference type="ChEBI" id="CHEBI:29105"/>
        <note>ligand shared between dimeric partners</note>
    </ligand>
</feature>
<feature type="binding site" evidence="1">
    <location>
        <position position="106"/>
    </location>
    <ligand>
        <name>Zn(2+)</name>
        <dbReference type="ChEBI" id="CHEBI:29105"/>
        <note>ligand shared between dimeric partners</note>
    </ligand>
</feature>
<dbReference type="EC" id="3.5.4.19" evidence="1"/>
<dbReference type="EMBL" id="CP000356">
    <property type="protein sequence ID" value="ABF53253.1"/>
    <property type="molecule type" value="Genomic_DNA"/>
</dbReference>
<dbReference type="RefSeq" id="WP_011541833.1">
    <property type="nucleotide sequence ID" value="NC_008048.1"/>
</dbReference>
<dbReference type="SMR" id="Q1GSW9"/>
<dbReference type="STRING" id="317655.Sala_1540"/>
<dbReference type="KEGG" id="sal:Sala_1540"/>
<dbReference type="eggNOG" id="COG0139">
    <property type="taxonomic scope" value="Bacteria"/>
</dbReference>
<dbReference type="HOGENOM" id="CLU_048577_5_0_5"/>
<dbReference type="OrthoDB" id="9795769at2"/>
<dbReference type="UniPathway" id="UPA00031">
    <property type="reaction ID" value="UER00008"/>
</dbReference>
<dbReference type="Proteomes" id="UP000006578">
    <property type="component" value="Chromosome"/>
</dbReference>
<dbReference type="GO" id="GO:0005737">
    <property type="term" value="C:cytoplasm"/>
    <property type="evidence" value="ECO:0007669"/>
    <property type="project" value="UniProtKB-SubCell"/>
</dbReference>
<dbReference type="GO" id="GO:0000287">
    <property type="term" value="F:magnesium ion binding"/>
    <property type="evidence" value="ECO:0007669"/>
    <property type="project" value="UniProtKB-UniRule"/>
</dbReference>
<dbReference type="GO" id="GO:0004635">
    <property type="term" value="F:phosphoribosyl-AMP cyclohydrolase activity"/>
    <property type="evidence" value="ECO:0007669"/>
    <property type="project" value="UniProtKB-UniRule"/>
</dbReference>
<dbReference type="GO" id="GO:0008270">
    <property type="term" value="F:zinc ion binding"/>
    <property type="evidence" value="ECO:0007669"/>
    <property type="project" value="UniProtKB-UniRule"/>
</dbReference>
<dbReference type="GO" id="GO:0000105">
    <property type="term" value="P:L-histidine biosynthetic process"/>
    <property type="evidence" value="ECO:0007669"/>
    <property type="project" value="UniProtKB-UniRule"/>
</dbReference>
<dbReference type="FunFam" id="3.10.20.810:FF:000001">
    <property type="entry name" value="Histidine biosynthesis bifunctional protein HisIE"/>
    <property type="match status" value="1"/>
</dbReference>
<dbReference type="Gene3D" id="4.10.80.70">
    <property type="match status" value="1"/>
</dbReference>
<dbReference type="Gene3D" id="3.10.20.810">
    <property type="entry name" value="Phosphoribosyl-AMP cyclohydrolase"/>
    <property type="match status" value="1"/>
</dbReference>
<dbReference type="HAMAP" id="MF_01021">
    <property type="entry name" value="HisI"/>
    <property type="match status" value="1"/>
</dbReference>
<dbReference type="InterPro" id="IPR026660">
    <property type="entry name" value="PRA-CH"/>
</dbReference>
<dbReference type="InterPro" id="IPR002496">
    <property type="entry name" value="PRib_AMP_CycHydrolase_dom"/>
</dbReference>
<dbReference type="InterPro" id="IPR038019">
    <property type="entry name" value="PRib_AMP_CycHydrolase_sf"/>
</dbReference>
<dbReference type="NCBIfam" id="NF000768">
    <property type="entry name" value="PRK00051.1"/>
    <property type="match status" value="1"/>
</dbReference>
<dbReference type="PANTHER" id="PTHR42945">
    <property type="entry name" value="HISTIDINE BIOSYNTHESIS BIFUNCTIONAL PROTEIN"/>
    <property type="match status" value="1"/>
</dbReference>
<dbReference type="PANTHER" id="PTHR42945:SF1">
    <property type="entry name" value="HISTIDINE BIOSYNTHESIS BIFUNCTIONAL PROTEIN HIS7"/>
    <property type="match status" value="1"/>
</dbReference>
<dbReference type="Pfam" id="PF01502">
    <property type="entry name" value="PRA-CH"/>
    <property type="match status" value="1"/>
</dbReference>
<dbReference type="SUPFAM" id="SSF141734">
    <property type="entry name" value="HisI-like"/>
    <property type="match status" value="1"/>
</dbReference>
<keyword id="KW-0028">Amino-acid biosynthesis</keyword>
<keyword id="KW-0963">Cytoplasm</keyword>
<keyword id="KW-0368">Histidine biosynthesis</keyword>
<keyword id="KW-0378">Hydrolase</keyword>
<keyword id="KW-0460">Magnesium</keyword>
<keyword id="KW-0479">Metal-binding</keyword>
<keyword id="KW-1185">Reference proteome</keyword>
<keyword id="KW-0862">Zinc</keyword>
<comment type="function">
    <text evidence="1">Catalyzes the hydrolysis of the adenine ring of phosphoribosyl-AMP.</text>
</comment>
<comment type="catalytic activity">
    <reaction evidence="1">
        <text>1-(5-phospho-beta-D-ribosyl)-5'-AMP + H2O = 1-(5-phospho-beta-D-ribosyl)-5-[(5-phospho-beta-D-ribosylamino)methylideneamino]imidazole-4-carboxamide</text>
        <dbReference type="Rhea" id="RHEA:20049"/>
        <dbReference type="ChEBI" id="CHEBI:15377"/>
        <dbReference type="ChEBI" id="CHEBI:58435"/>
        <dbReference type="ChEBI" id="CHEBI:59457"/>
        <dbReference type="EC" id="3.5.4.19"/>
    </reaction>
</comment>
<comment type="cofactor">
    <cofactor evidence="1">
        <name>Mg(2+)</name>
        <dbReference type="ChEBI" id="CHEBI:18420"/>
    </cofactor>
    <text evidence="1">Binds 1 Mg(2+) ion per subunit.</text>
</comment>
<comment type="cofactor">
    <cofactor evidence="1">
        <name>Zn(2+)</name>
        <dbReference type="ChEBI" id="CHEBI:29105"/>
    </cofactor>
    <text evidence="1">Binds 1 zinc ion per subunit.</text>
</comment>
<comment type="pathway">
    <text evidence="1">Amino-acid biosynthesis; L-histidine biosynthesis; L-histidine from 5-phospho-alpha-D-ribose 1-diphosphate: step 3/9.</text>
</comment>
<comment type="subunit">
    <text evidence="1">Homodimer.</text>
</comment>
<comment type="subcellular location">
    <subcellularLocation>
        <location evidence="1">Cytoplasm</location>
    </subcellularLocation>
</comment>
<comment type="similarity">
    <text evidence="1">Belongs to the PRA-CH family.</text>
</comment>